<gene>
    <name type="ordered locus">BAV3236</name>
</gene>
<proteinExistence type="inferred from homology"/>
<accession>Q2KU14</accession>
<keyword id="KW-1185">Reference proteome</keyword>
<evidence type="ECO:0000255" key="1">
    <source>
        <dbReference type="HAMAP-Rule" id="MF_00489"/>
    </source>
</evidence>
<feature type="chain" id="PRO_0000241808" description="UPF0178 protein BAV3236">
    <location>
        <begin position="1"/>
        <end position="154"/>
    </location>
</feature>
<sequence length="154" mass="16585">MHIWVDADACPAVIKDILFRAAQRWQIPLTLVANQMLRTPPSALIRAVQVPRGFDVADAHIATHAVAGDLVITADIPLAADVLAKGALALNPRGERYSPDTIRERLSLRDMMEELRASGVDTGGPAAFSQADRKAFANQLDALLARQAAQASRP</sequence>
<dbReference type="EMBL" id="AM167904">
    <property type="protein sequence ID" value="CAJ50846.1"/>
    <property type="molecule type" value="Genomic_DNA"/>
</dbReference>
<dbReference type="RefSeq" id="WP_012418873.1">
    <property type="nucleotide sequence ID" value="NC_010645.1"/>
</dbReference>
<dbReference type="STRING" id="360910.BAV3236"/>
<dbReference type="GeneID" id="92933506"/>
<dbReference type="KEGG" id="bav:BAV3236"/>
<dbReference type="eggNOG" id="COG1671">
    <property type="taxonomic scope" value="Bacteria"/>
</dbReference>
<dbReference type="HOGENOM" id="CLU_106619_2_1_4"/>
<dbReference type="OrthoDB" id="9798918at2"/>
<dbReference type="Proteomes" id="UP000001977">
    <property type="component" value="Chromosome"/>
</dbReference>
<dbReference type="CDD" id="cd18720">
    <property type="entry name" value="PIN_YqxD-like"/>
    <property type="match status" value="1"/>
</dbReference>
<dbReference type="HAMAP" id="MF_00489">
    <property type="entry name" value="UPF0178"/>
    <property type="match status" value="1"/>
</dbReference>
<dbReference type="InterPro" id="IPR003791">
    <property type="entry name" value="UPF0178"/>
</dbReference>
<dbReference type="NCBIfam" id="NF001095">
    <property type="entry name" value="PRK00124.1"/>
    <property type="match status" value="1"/>
</dbReference>
<dbReference type="PANTHER" id="PTHR35146">
    <property type="entry name" value="UPF0178 PROTEIN YAII"/>
    <property type="match status" value="1"/>
</dbReference>
<dbReference type="PANTHER" id="PTHR35146:SF1">
    <property type="entry name" value="UPF0178 PROTEIN YAII"/>
    <property type="match status" value="1"/>
</dbReference>
<dbReference type="Pfam" id="PF02639">
    <property type="entry name" value="DUF188"/>
    <property type="match status" value="1"/>
</dbReference>
<name>Y3236_BORA1</name>
<comment type="similarity">
    <text evidence="1">Belongs to the UPF0178 family.</text>
</comment>
<organism>
    <name type="scientific">Bordetella avium (strain 197N)</name>
    <dbReference type="NCBI Taxonomy" id="360910"/>
    <lineage>
        <taxon>Bacteria</taxon>
        <taxon>Pseudomonadati</taxon>
        <taxon>Pseudomonadota</taxon>
        <taxon>Betaproteobacteria</taxon>
        <taxon>Burkholderiales</taxon>
        <taxon>Alcaligenaceae</taxon>
        <taxon>Bordetella</taxon>
    </lineage>
</organism>
<protein>
    <recommendedName>
        <fullName evidence="1">UPF0178 protein BAV3236</fullName>
    </recommendedName>
</protein>
<reference key="1">
    <citation type="journal article" date="2006" name="J. Bacteriol.">
        <title>Comparison of the genome sequence of the poultry pathogen Bordetella avium with those of B. bronchiseptica, B. pertussis, and B. parapertussis reveals extensive diversity in surface structures associated with host interaction.</title>
        <authorList>
            <person name="Sebaihia M."/>
            <person name="Preston A."/>
            <person name="Maskell D.J."/>
            <person name="Kuzmiak H."/>
            <person name="Connell T.D."/>
            <person name="King N.D."/>
            <person name="Orndorff P.E."/>
            <person name="Miyamoto D.M."/>
            <person name="Thomson N.R."/>
            <person name="Harris D."/>
            <person name="Goble A."/>
            <person name="Lord A."/>
            <person name="Murphy L."/>
            <person name="Quail M.A."/>
            <person name="Rutter S."/>
            <person name="Squares R."/>
            <person name="Squares S."/>
            <person name="Woodward J."/>
            <person name="Parkhill J."/>
            <person name="Temple L.M."/>
        </authorList>
    </citation>
    <scope>NUCLEOTIDE SEQUENCE [LARGE SCALE GENOMIC DNA]</scope>
    <source>
        <strain>197N</strain>
    </source>
</reference>